<keyword id="KW-0378">Hydrolase</keyword>
<keyword id="KW-0479">Metal-binding</keyword>
<keyword id="KW-0482">Metalloprotease</keyword>
<keyword id="KW-0645">Protease</keyword>
<keyword id="KW-0862">Zinc</keyword>
<name>Y4155_YERPY</name>
<comment type="similarity">
    <text evidence="1">Belongs to the UPF0758 family. YicR subfamily.</text>
</comment>
<accession>B1JQX3</accession>
<protein>
    <recommendedName>
        <fullName evidence="1">UPF0758 protein YPK_4155</fullName>
    </recommendedName>
</protein>
<feature type="chain" id="PRO_1000089875" description="UPF0758 protein YPK_4155">
    <location>
        <begin position="1"/>
        <end position="222"/>
    </location>
</feature>
<feature type="domain" description="MPN" evidence="2">
    <location>
        <begin position="100"/>
        <end position="222"/>
    </location>
</feature>
<feature type="short sequence motif" description="JAMM motif" evidence="2">
    <location>
        <begin position="171"/>
        <end position="184"/>
    </location>
</feature>
<feature type="binding site" evidence="2">
    <location>
        <position position="171"/>
    </location>
    <ligand>
        <name>Zn(2+)</name>
        <dbReference type="ChEBI" id="CHEBI:29105"/>
        <note>catalytic</note>
    </ligand>
</feature>
<feature type="binding site" evidence="2">
    <location>
        <position position="173"/>
    </location>
    <ligand>
        <name>Zn(2+)</name>
        <dbReference type="ChEBI" id="CHEBI:29105"/>
        <note>catalytic</note>
    </ligand>
</feature>
<feature type="binding site" evidence="2">
    <location>
        <position position="184"/>
    </location>
    <ligand>
        <name>Zn(2+)</name>
        <dbReference type="ChEBI" id="CHEBI:29105"/>
        <note>catalytic</note>
    </ligand>
</feature>
<organism>
    <name type="scientific">Yersinia pseudotuberculosis serotype O:3 (strain YPIII)</name>
    <dbReference type="NCBI Taxonomy" id="502800"/>
    <lineage>
        <taxon>Bacteria</taxon>
        <taxon>Pseudomonadati</taxon>
        <taxon>Pseudomonadota</taxon>
        <taxon>Gammaproteobacteria</taxon>
        <taxon>Enterobacterales</taxon>
        <taxon>Yersiniaceae</taxon>
        <taxon>Yersinia</taxon>
    </lineage>
</organism>
<dbReference type="EMBL" id="CP000950">
    <property type="protein sequence ID" value="ACA70414.1"/>
    <property type="molecule type" value="Genomic_DNA"/>
</dbReference>
<dbReference type="SMR" id="B1JQX3"/>
<dbReference type="KEGG" id="ypy:YPK_4155"/>
<dbReference type="PATRIC" id="fig|502800.11.peg.506"/>
<dbReference type="GO" id="GO:0046872">
    <property type="term" value="F:metal ion binding"/>
    <property type="evidence" value="ECO:0007669"/>
    <property type="project" value="UniProtKB-KW"/>
</dbReference>
<dbReference type="GO" id="GO:0008237">
    <property type="term" value="F:metallopeptidase activity"/>
    <property type="evidence" value="ECO:0007669"/>
    <property type="project" value="UniProtKB-KW"/>
</dbReference>
<dbReference type="GO" id="GO:0006508">
    <property type="term" value="P:proteolysis"/>
    <property type="evidence" value="ECO:0007669"/>
    <property type="project" value="UniProtKB-KW"/>
</dbReference>
<dbReference type="CDD" id="cd08071">
    <property type="entry name" value="MPN_DUF2466"/>
    <property type="match status" value="1"/>
</dbReference>
<dbReference type="Gene3D" id="3.40.140.10">
    <property type="entry name" value="Cytidine Deaminase, domain 2"/>
    <property type="match status" value="1"/>
</dbReference>
<dbReference type="HAMAP" id="MF_00018">
    <property type="entry name" value="UPF0758_YicR"/>
    <property type="match status" value="1"/>
</dbReference>
<dbReference type="InterPro" id="IPR037518">
    <property type="entry name" value="MPN"/>
</dbReference>
<dbReference type="InterPro" id="IPR025657">
    <property type="entry name" value="RadC_JAB"/>
</dbReference>
<dbReference type="InterPro" id="IPR010994">
    <property type="entry name" value="RuvA_2-like"/>
</dbReference>
<dbReference type="InterPro" id="IPR001405">
    <property type="entry name" value="UPF0758"/>
</dbReference>
<dbReference type="InterPro" id="IPR020891">
    <property type="entry name" value="UPF0758_CS"/>
</dbReference>
<dbReference type="InterPro" id="IPR046778">
    <property type="entry name" value="UPF0758_N"/>
</dbReference>
<dbReference type="InterPro" id="IPR022820">
    <property type="entry name" value="UPF0758_YicR"/>
</dbReference>
<dbReference type="NCBIfam" id="NF000642">
    <property type="entry name" value="PRK00024.1"/>
    <property type="match status" value="1"/>
</dbReference>
<dbReference type="NCBIfam" id="TIGR00608">
    <property type="entry name" value="radc"/>
    <property type="match status" value="1"/>
</dbReference>
<dbReference type="PANTHER" id="PTHR30471">
    <property type="entry name" value="DNA REPAIR PROTEIN RADC"/>
    <property type="match status" value="1"/>
</dbReference>
<dbReference type="PANTHER" id="PTHR30471:SF3">
    <property type="entry name" value="UPF0758 PROTEIN YEES-RELATED"/>
    <property type="match status" value="1"/>
</dbReference>
<dbReference type="Pfam" id="PF04002">
    <property type="entry name" value="RadC"/>
    <property type="match status" value="1"/>
</dbReference>
<dbReference type="Pfam" id="PF20582">
    <property type="entry name" value="UPF0758_N"/>
    <property type="match status" value="1"/>
</dbReference>
<dbReference type="SUPFAM" id="SSF47781">
    <property type="entry name" value="RuvA domain 2-like"/>
    <property type="match status" value="1"/>
</dbReference>
<dbReference type="PROSITE" id="PS50249">
    <property type="entry name" value="MPN"/>
    <property type="match status" value="1"/>
</dbReference>
<dbReference type="PROSITE" id="PS01302">
    <property type="entry name" value="UPF0758"/>
    <property type="match status" value="1"/>
</dbReference>
<gene>
    <name type="ordered locus">YPK_4155</name>
</gene>
<sequence length="222" mass="24814">MDEWYGQVAPREKLLKYGAAVLTDAELLAIFLRTGIPGMHVMKMAEYLIETFGSLHGLISADYQTLCAHKGIGASKYSQIQAIGELACRCFSSHLMRESVLLNPGITQKFLQNILSHREREIFLVVFLDNQHRVIRHEEMFTGTISSVEVHPREIVREALKVNAAALILAHNHPSGKAEPSQADRLITTQVIKACSLLDIRVLDHLVVGRGECVSFAERGWL</sequence>
<reference key="1">
    <citation type="submission" date="2008-02" db="EMBL/GenBank/DDBJ databases">
        <title>Complete sequence of Yersinia pseudotuberculosis YPIII.</title>
        <authorList>
            <consortium name="US DOE Joint Genome Institute"/>
            <person name="Copeland A."/>
            <person name="Lucas S."/>
            <person name="Lapidus A."/>
            <person name="Glavina del Rio T."/>
            <person name="Dalin E."/>
            <person name="Tice H."/>
            <person name="Bruce D."/>
            <person name="Goodwin L."/>
            <person name="Pitluck S."/>
            <person name="Munk A.C."/>
            <person name="Brettin T."/>
            <person name="Detter J.C."/>
            <person name="Han C."/>
            <person name="Tapia R."/>
            <person name="Schmutz J."/>
            <person name="Larimer F."/>
            <person name="Land M."/>
            <person name="Hauser L."/>
            <person name="Challacombe J.F."/>
            <person name="Green L."/>
            <person name="Lindler L.E."/>
            <person name="Nikolich M.P."/>
            <person name="Richardson P."/>
        </authorList>
    </citation>
    <scope>NUCLEOTIDE SEQUENCE [LARGE SCALE GENOMIC DNA]</scope>
    <source>
        <strain>YPIII</strain>
    </source>
</reference>
<proteinExistence type="inferred from homology"/>
<evidence type="ECO:0000255" key="1">
    <source>
        <dbReference type="HAMAP-Rule" id="MF_00018"/>
    </source>
</evidence>
<evidence type="ECO:0000255" key="2">
    <source>
        <dbReference type="PROSITE-ProRule" id="PRU01182"/>
    </source>
</evidence>